<gene>
    <name evidence="1" type="primary">rplV</name>
    <name type="ordered locus">Rcas_4021</name>
</gene>
<protein>
    <recommendedName>
        <fullName evidence="1">Large ribosomal subunit protein uL22</fullName>
    </recommendedName>
    <alternativeName>
        <fullName evidence="2">50S ribosomal protein L22</fullName>
    </alternativeName>
</protein>
<organism>
    <name type="scientific">Roseiflexus castenholzii (strain DSM 13941 / HLO8)</name>
    <dbReference type="NCBI Taxonomy" id="383372"/>
    <lineage>
        <taxon>Bacteria</taxon>
        <taxon>Bacillati</taxon>
        <taxon>Chloroflexota</taxon>
        <taxon>Chloroflexia</taxon>
        <taxon>Chloroflexales</taxon>
        <taxon>Roseiflexineae</taxon>
        <taxon>Roseiflexaceae</taxon>
        <taxon>Roseiflexus</taxon>
    </lineage>
</organism>
<proteinExistence type="inferred from homology"/>
<comment type="function">
    <text evidence="1">This protein binds specifically to 23S rRNA; its binding is stimulated by other ribosomal proteins, e.g. L4, L17, and L20. It is important during the early stages of 50S assembly. It makes multiple contacts with different domains of the 23S rRNA in the assembled 50S subunit and ribosome (By similarity).</text>
</comment>
<comment type="function">
    <text evidence="1">The globular domain of the protein is located near the polypeptide exit tunnel on the outside of the subunit, while an extended beta-hairpin is found that lines the wall of the exit tunnel in the center of the 70S ribosome.</text>
</comment>
<comment type="subunit">
    <text evidence="1">Part of the 50S ribosomal subunit.</text>
</comment>
<comment type="similarity">
    <text evidence="1">Belongs to the universal ribosomal protein uL22 family.</text>
</comment>
<feature type="chain" id="PRO_1000086566" description="Large ribosomal subunit protein uL22">
    <location>
        <begin position="1"/>
        <end position="113"/>
    </location>
</feature>
<keyword id="KW-1185">Reference proteome</keyword>
<keyword id="KW-0687">Ribonucleoprotein</keyword>
<keyword id="KW-0689">Ribosomal protein</keyword>
<keyword id="KW-0694">RNA-binding</keyword>
<keyword id="KW-0699">rRNA-binding</keyword>
<name>RL22_ROSCS</name>
<dbReference type="EMBL" id="CP000804">
    <property type="protein sequence ID" value="ABU60054.1"/>
    <property type="molecule type" value="Genomic_DNA"/>
</dbReference>
<dbReference type="RefSeq" id="WP_012122476.1">
    <property type="nucleotide sequence ID" value="NC_009767.1"/>
</dbReference>
<dbReference type="SMR" id="A7NR58"/>
<dbReference type="STRING" id="383372.Rcas_4021"/>
<dbReference type="KEGG" id="rca:Rcas_4021"/>
<dbReference type="eggNOG" id="COG0091">
    <property type="taxonomic scope" value="Bacteria"/>
</dbReference>
<dbReference type="HOGENOM" id="CLU_083987_3_3_0"/>
<dbReference type="OrthoDB" id="9805969at2"/>
<dbReference type="Proteomes" id="UP000000263">
    <property type="component" value="Chromosome"/>
</dbReference>
<dbReference type="GO" id="GO:0022625">
    <property type="term" value="C:cytosolic large ribosomal subunit"/>
    <property type="evidence" value="ECO:0007669"/>
    <property type="project" value="TreeGrafter"/>
</dbReference>
<dbReference type="GO" id="GO:0019843">
    <property type="term" value="F:rRNA binding"/>
    <property type="evidence" value="ECO:0007669"/>
    <property type="project" value="UniProtKB-UniRule"/>
</dbReference>
<dbReference type="GO" id="GO:0003735">
    <property type="term" value="F:structural constituent of ribosome"/>
    <property type="evidence" value="ECO:0007669"/>
    <property type="project" value="InterPro"/>
</dbReference>
<dbReference type="GO" id="GO:0006412">
    <property type="term" value="P:translation"/>
    <property type="evidence" value="ECO:0007669"/>
    <property type="project" value="UniProtKB-UniRule"/>
</dbReference>
<dbReference type="CDD" id="cd00336">
    <property type="entry name" value="Ribosomal_L22"/>
    <property type="match status" value="1"/>
</dbReference>
<dbReference type="Gene3D" id="3.90.470.10">
    <property type="entry name" value="Ribosomal protein L22/L17"/>
    <property type="match status" value="1"/>
</dbReference>
<dbReference type="HAMAP" id="MF_01331_B">
    <property type="entry name" value="Ribosomal_uL22_B"/>
    <property type="match status" value="1"/>
</dbReference>
<dbReference type="InterPro" id="IPR001063">
    <property type="entry name" value="Ribosomal_uL22"/>
</dbReference>
<dbReference type="InterPro" id="IPR005727">
    <property type="entry name" value="Ribosomal_uL22_bac/chlpt-type"/>
</dbReference>
<dbReference type="InterPro" id="IPR047867">
    <property type="entry name" value="Ribosomal_uL22_bac/org-type"/>
</dbReference>
<dbReference type="InterPro" id="IPR018260">
    <property type="entry name" value="Ribosomal_uL22_CS"/>
</dbReference>
<dbReference type="InterPro" id="IPR036394">
    <property type="entry name" value="Ribosomal_uL22_sf"/>
</dbReference>
<dbReference type="NCBIfam" id="TIGR01044">
    <property type="entry name" value="rplV_bact"/>
    <property type="match status" value="1"/>
</dbReference>
<dbReference type="PANTHER" id="PTHR13501">
    <property type="entry name" value="CHLOROPLAST 50S RIBOSOMAL PROTEIN L22-RELATED"/>
    <property type="match status" value="1"/>
</dbReference>
<dbReference type="PANTHER" id="PTHR13501:SF8">
    <property type="entry name" value="LARGE RIBOSOMAL SUBUNIT PROTEIN UL22M"/>
    <property type="match status" value="1"/>
</dbReference>
<dbReference type="Pfam" id="PF00237">
    <property type="entry name" value="Ribosomal_L22"/>
    <property type="match status" value="1"/>
</dbReference>
<dbReference type="SUPFAM" id="SSF54843">
    <property type="entry name" value="Ribosomal protein L22"/>
    <property type="match status" value="1"/>
</dbReference>
<dbReference type="PROSITE" id="PS00464">
    <property type="entry name" value="RIBOSOMAL_L22"/>
    <property type="match status" value="1"/>
</dbReference>
<reference key="1">
    <citation type="submission" date="2007-08" db="EMBL/GenBank/DDBJ databases">
        <title>Complete sequence of Roseiflexus castenholzii DSM 13941.</title>
        <authorList>
            <consortium name="US DOE Joint Genome Institute"/>
            <person name="Copeland A."/>
            <person name="Lucas S."/>
            <person name="Lapidus A."/>
            <person name="Barry K."/>
            <person name="Glavina del Rio T."/>
            <person name="Dalin E."/>
            <person name="Tice H."/>
            <person name="Pitluck S."/>
            <person name="Thompson L.S."/>
            <person name="Brettin T."/>
            <person name="Bruce D."/>
            <person name="Detter J.C."/>
            <person name="Han C."/>
            <person name="Tapia R."/>
            <person name="Schmutz J."/>
            <person name="Larimer F."/>
            <person name="Land M."/>
            <person name="Hauser L."/>
            <person name="Kyrpides N."/>
            <person name="Mikhailova N."/>
            <person name="Bryant D.A."/>
            <person name="Hanada S."/>
            <person name="Tsukatani Y."/>
            <person name="Richardson P."/>
        </authorList>
    </citation>
    <scope>NUCLEOTIDE SEQUENCE [LARGE SCALE GENOMIC DNA]</scope>
    <source>
        <strain>DSM 13941 / HLO8</strain>
    </source>
</reference>
<accession>A7NR58</accession>
<evidence type="ECO:0000255" key="1">
    <source>
        <dbReference type="HAMAP-Rule" id="MF_01331"/>
    </source>
</evidence>
<evidence type="ECO:0000305" key="2"/>
<sequence>MQAKAVTKYVRISPTKVRPVMDLVRGKPVDRALAILRYLPHKAAREIARTIESARANATNNYDMAPDALVVKYIFADEGPAFKRIMPRARGRADRIRKRTTHITVIVDDGEEM</sequence>